<dbReference type="EMBL" id="CP001164">
    <property type="protein sequence ID" value="ACI38575.1"/>
    <property type="molecule type" value="Genomic_DNA"/>
</dbReference>
<dbReference type="RefSeq" id="WP_000907085.1">
    <property type="nucleotide sequence ID" value="NC_011353.1"/>
</dbReference>
<dbReference type="SMR" id="B5YTR1"/>
<dbReference type="KEGG" id="ecf:ECH74115_4664"/>
<dbReference type="HOGENOM" id="CLU_186759_1_0_6"/>
<dbReference type="Gene3D" id="1.10.10.610">
    <property type="entry name" value="YehU-like"/>
    <property type="match status" value="1"/>
</dbReference>
<dbReference type="HAMAP" id="MF_00690">
    <property type="entry name" value="UPF0270"/>
    <property type="match status" value="1"/>
</dbReference>
<dbReference type="InterPro" id="IPR010648">
    <property type="entry name" value="UPF0270"/>
</dbReference>
<dbReference type="InterPro" id="IPR036685">
    <property type="entry name" value="YehU-like_sf"/>
</dbReference>
<dbReference type="NCBIfam" id="NF003438">
    <property type="entry name" value="PRK04966.1"/>
    <property type="match status" value="1"/>
</dbReference>
<dbReference type="Pfam" id="PF06794">
    <property type="entry name" value="UPF0270"/>
    <property type="match status" value="1"/>
</dbReference>
<dbReference type="PIRSF" id="PIRSF006169">
    <property type="entry name" value="UCP006169"/>
    <property type="match status" value="1"/>
</dbReference>
<dbReference type="SUPFAM" id="SSF118001">
    <property type="entry name" value="YehU-like"/>
    <property type="match status" value="1"/>
</dbReference>
<feature type="chain" id="PRO_1000132007" description="UPF0270 protein YheU">
    <location>
        <begin position="1"/>
        <end position="72"/>
    </location>
</feature>
<proteinExistence type="inferred from homology"/>
<sequence length="72" mass="8470">MLIPWQDLSPETLENLIESFVLREGTDYGEHERTLEQKVADVKRQLQCGEAVLVWSELHETVNIMPRSQFRE</sequence>
<gene>
    <name evidence="1" type="primary">yheU</name>
    <name type="ordered locus">ECH74115_4664</name>
</gene>
<comment type="similarity">
    <text evidence="1">Belongs to the UPF0270 family.</text>
</comment>
<name>YHEU_ECO5E</name>
<organism>
    <name type="scientific">Escherichia coli O157:H7 (strain EC4115 / EHEC)</name>
    <dbReference type="NCBI Taxonomy" id="444450"/>
    <lineage>
        <taxon>Bacteria</taxon>
        <taxon>Pseudomonadati</taxon>
        <taxon>Pseudomonadota</taxon>
        <taxon>Gammaproteobacteria</taxon>
        <taxon>Enterobacterales</taxon>
        <taxon>Enterobacteriaceae</taxon>
        <taxon>Escherichia</taxon>
    </lineage>
</organism>
<accession>B5YTR1</accession>
<evidence type="ECO:0000255" key="1">
    <source>
        <dbReference type="HAMAP-Rule" id="MF_00690"/>
    </source>
</evidence>
<reference key="1">
    <citation type="journal article" date="2011" name="Proc. Natl. Acad. Sci. U.S.A.">
        <title>Genomic anatomy of Escherichia coli O157:H7 outbreaks.</title>
        <authorList>
            <person name="Eppinger M."/>
            <person name="Mammel M.K."/>
            <person name="Leclerc J.E."/>
            <person name="Ravel J."/>
            <person name="Cebula T.A."/>
        </authorList>
    </citation>
    <scope>NUCLEOTIDE SEQUENCE [LARGE SCALE GENOMIC DNA]</scope>
    <source>
        <strain>EC4115 / EHEC</strain>
    </source>
</reference>
<protein>
    <recommendedName>
        <fullName evidence="1">UPF0270 protein YheU</fullName>
    </recommendedName>
</protein>